<organism>
    <name type="scientific">Pyrobaculum arsenaticum (strain DSM 13514 / JCM 11321 / PZ6)</name>
    <dbReference type="NCBI Taxonomy" id="340102"/>
    <lineage>
        <taxon>Archaea</taxon>
        <taxon>Thermoproteota</taxon>
        <taxon>Thermoprotei</taxon>
        <taxon>Thermoproteales</taxon>
        <taxon>Thermoproteaceae</taxon>
        <taxon>Pyrobaculum</taxon>
    </lineage>
</organism>
<reference key="1">
    <citation type="submission" date="2007-04" db="EMBL/GenBank/DDBJ databases">
        <title>Complete sequence of Pyrobaculum arsenaticum DSM 13514.</title>
        <authorList>
            <consortium name="US DOE Joint Genome Institute"/>
            <person name="Copeland A."/>
            <person name="Lucas S."/>
            <person name="Lapidus A."/>
            <person name="Barry K."/>
            <person name="Glavina del Rio T."/>
            <person name="Dalin E."/>
            <person name="Tice H."/>
            <person name="Pitluck S."/>
            <person name="Chain P."/>
            <person name="Malfatti S."/>
            <person name="Shin M."/>
            <person name="Vergez L."/>
            <person name="Schmutz J."/>
            <person name="Larimer F."/>
            <person name="Land M."/>
            <person name="Hauser L."/>
            <person name="Kyrpides N."/>
            <person name="Mikhailova N."/>
            <person name="Cozen A.E."/>
            <person name="Fitz-Gibbon S.T."/>
            <person name="House C.H."/>
            <person name="Saltikov C."/>
            <person name="Lowe T.M."/>
            <person name="Richardson P."/>
        </authorList>
    </citation>
    <scope>NUCLEOTIDE SEQUENCE [LARGE SCALE GENOMIC DNA]</scope>
    <source>
        <strain>ATCC 700994 / DSM 13514 / JCM 11321 / PZ6</strain>
    </source>
</reference>
<name>G3P_PYRAR</name>
<sequence length="344" mass="37492">MIRVGIVGFGTIGKRIADAVAAQGDMHVSGVLKVTPDYEVLVAAAKGFKVYTLPDRVEKFKKAGIEPAGTIEDLIKASDVIIDASPEDVGAENKEKYYSKFDKPVIFQGGEEAEVAEVSFNALANYDEARGRRYVRVVSCNTTGITRVLTSLMLNGVGIKKARIFIARRGADPKEYKKGPINDVVPNPATVPSHHGPDVKTVLKNVDIVTMAVAVPVTIMHMHMAFLELDGAYPRDAVLEALAKTPRIFLADVGAGFQSLAQIIEYARDLGRPRGDFPEVAIFRDSVTVNGNELYLMYGVHQESIVVPENVDAVRAVLGAMPKWESIKKTDTTLKLFTEGKRYG</sequence>
<keyword id="KW-0963">Cytoplasm</keyword>
<keyword id="KW-0324">Glycolysis</keyword>
<keyword id="KW-0520">NAD</keyword>
<keyword id="KW-0521">NADP</keyword>
<keyword id="KW-0560">Oxidoreductase</keyword>
<evidence type="ECO:0000255" key="1">
    <source>
        <dbReference type="HAMAP-Rule" id="MF_00559"/>
    </source>
</evidence>
<dbReference type="EC" id="1.2.1.59" evidence="1"/>
<dbReference type="EMBL" id="CP000660">
    <property type="protein sequence ID" value="ABP50329.1"/>
    <property type="molecule type" value="Genomic_DNA"/>
</dbReference>
<dbReference type="SMR" id="A4WIW2"/>
<dbReference type="STRING" id="340102.Pars_0743"/>
<dbReference type="KEGG" id="pas:Pars_0743"/>
<dbReference type="HOGENOM" id="CLU_069533_0_0_2"/>
<dbReference type="OrthoDB" id="295712at2157"/>
<dbReference type="PhylomeDB" id="A4WIW2"/>
<dbReference type="UniPathway" id="UPA00109">
    <property type="reaction ID" value="UER00184"/>
</dbReference>
<dbReference type="Proteomes" id="UP000001567">
    <property type="component" value="Chromosome"/>
</dbReference>
<dbReference type="GO" id="GO:0005737">
    <property type="term" value="C:cytoplasm"/>
    <property type="evidence" value="ECO:0007669"/>
    <property type="project" value="UniProtKB-SubCell"/>
</dbReference>
<dbReference type="GO" id="GO:0008839">
    <property type="term" value="F:4-hydroxy-tetrahydrodipicolinate reductase"/>
    <property type="evidence" value="ECO:0007669"/>
    <property type="project" value="InterPro"/>
</dbReference>
<dbReference type="GO" id="GO:0004365">
    <property type="term" value="F:glyceraldehyde-3-phosphate dehydrogenase (NAD+) (phosphorylating) activity"/>
    <property type="evidence" value="ECO:0007669"/>
    <property type="project" value="UniProtKB-UniRule"/>
</dbReference>
<dbReference type="GO" id="GO:0047100">
    <property type="term" value="F:glyceraldehyde-3-phosphate dehydrogenase (NADP+) (phosphorylating) activity"/>
    <property type="evidence" value="ECO:0007669"/>
    <property type="project" value="RHEA"/>
</dbReference>
<dbReference type="GO" id="GO:0051287">
    <property type="term" value="F:NAD binding"/>
    <property type="evidence" value="ECO:0007669"/>
    <property type="project" value="InterPro"/>
</dbReference>
<dbReference type="GO" id="GO:0050661">
    <property type="term" value="F:NADP binding"/>
    <property type="evidence" value="ECO:0007669"/>
    <property type="project" value="InterPro"/>
</dbReference>
<dbReference type="GO" id="GO:0006096">
    <property type="term" value="P:glycolytic process"/>
    <property type="evidence" value="ECO:0007669"/>
    <property type="project" value="UniProtKB-UniRule"/>
</dbReference>
<dbReference type="GO" id="GO:0009089">
    <property type="term" value="P:lysine biosynthetic process via diaminopimelate"/>
    <property type="evidence" value="ECO:0007669"/>
    <property type="project" value="InterPro"/>
</dbReference>
<dbReference type="CDD" id="cd18127">
    <property type="entry name" value="GAPDH_II_C"/>
    <property type="match status" value="1"/>
</dbReference>
<dbReference type="CDD" id="cd02278">
    <property type="entry name" value="GAPDH_II_N"/>
    <property type="match status" value="1"/>
</dbReference>
<dbReference type="Gene3D" id="3.30.360.10">
    <property type="entry name" value="Dihydrodipicolinate Reductase, domain 2"/>
    <property type="match status" value="1"/>
</dbReference>
<dbReference type="Gene3D" id="3.40.50.720">
    <property type="entry name" value="NAD(P)-binding Rossmann-like Domain"/>
    <property type="match status" value="1"/>
</dbReference>
<dbReference type="HAMAP" id="MF_00559">
    <property type="entry name" value="G3P_dehdrog_arch"/>
    <property type="match status" value="1"/>
</dbReference>
<dbReference type="InterPro" id="IPR000846">
    <property type="entry name" value="DapB_N"/>
</dbReference>
<dbReference type="InterPro" id="IPR020831">
    <property type="entry name" value="GlycerAld/Erythrose_P_DH"/>
</dbReference>
<dbReference type="InterPro" id="IPR020830">
    <property type="entry name" value="GlycerAld_3-P_DH_AS"/>
</dbReference>
<dbReference type="InterPro" id="IPR020829">
    <property type="entry name" value="GlycerAld_3-P_DH_cat"/>
</dbReference>
<dbReference type="InterPro" id="IPR020828">
    <property type="entry name" value="GlycerAld_3-P_DH_NAD(P)-bd"/>
</dbReference>
<dbReference type="InterPro" id="IPR006436">
    <property type="entry name" value="Glyceraldehyde-3-P_DH_2_arc"/>
</dbReference>
<dbReference type="InterPro" id="IPR036291">
    <property type="entry name" value="NAD(P)-bd_dom_sf"/>
</dbReference>
<dbReference type="NCBIfam" id="TIGR01546">
    <property type="entry name" value="GAPDH-II_archae"/>
    <property type="match status" value="1"/>
</dbReference>
<dbReference type="NCBIfam" id="NF003251">
    <property type="entry name" value="PRK04207.1"/>
    <property type="match status" value="1"/>
</dbReference>
<dbReference type="Pfam" id="PF01113">
    <property type="entry name" value="DapB_N"/>
    <property type="match status" value="1"/>
</dbReference>
<dbReference type="Pfam" id="PF02800">
    <property type="entry name" value="Gp_dh_C"/>
    <property type="match status" value="1"/>
</dbReference>
<dbReference type="PIRSF" id="PIRSF000149">
    <property type="entry name" value="GAP_DH"/>
    <property type="match status" value="1"/>
</dbReference>
<dbReference type="SMART" id="SM00846">
    <property type="entry name" value="Gp_dh_N"/>
    <property type="match status" value="1"/>
</dbReference>
<dbReference type="SUPFAM" id="SSF55347">
    <property type="entry name" value="Glyceraldehyde-3-phosphate dehydrogenase-like, C-terminal domain"/>
    <property type="match status" value="1"/>
</dbReference>
<dbReference type="SUPFAM" id="SSF51735">
    <property type="entry name" value="NAD(P)-binding Rossmann-fold domains"/>
    <property type="match status" value="1"/>
</dbReference>
<dbReference type="PROSITE" id="PS00071">
    <property type="entry name" value="GAPDH"/>
    <property type="match status" value="1"/>
</dbReference>
<protein>
    <recommendedName>
        <fullName evidence="1">Glyceraldehyde-3-phosphate dehydrogenase</fullName>
        <shortName evidence="1">GAPDH</shortName>
        <ecNumber evidence="1">1.2.1.59</ecNumber>
    </recommendedName>
    <alternativeName>
        <fullName evidence="1">NAD(P)-dependent glyceraldehyde-3-phosphate dehydrogenase</fullName>
    </alternativeName>
</protein>
<comment type="catalytic activity">
    <reaction evidence="1">
        <text>D-glyceraldehyde 3-phosphate + phosphate + NADP(+) = (2R)-3-phospho-glyceroyl phosphate + NADPH + H(+)</text>
        <dbReference type="Rhea" id="RHEA:10296"/>
        <dbReference type="ChEBI" id="CHEBI:15378"/>
        <dbReference type="ChEBI" id="CHEBI:43474"/>
        <dbReference type="ChEBI" id="CHEBI:57604"/>
        <dbReference type="ChEBI" id="CHEBI:57783"/>
        <dbReference type="ChEBI" id="CHEBI:58349"/>
        <dbReference type="ChEBI" id="CHEBI:59776"/>
        <dbReference type="EC" id="1.2.1.59"/>
    </reaction>
</comment>
<comment type="catalytic activity">
    <reaction evidence="1">
        <text>D-glyceraldehyde 3-phosphate + phosphate + NAD(+) = (2R)-3-phospho-glyceroyl phosphate + NADH + H(+)</text>
        <dbReference type="Rhea" id="RHEA:10300"/>
        <dbReference type="ChEBI" id="CHEBI:15378"/>
        <dbReference type="ChEBI" id="CHEBI:43474"/>
        <dbReference type="ChEBI" id="CHEBI:57540"/>
        <dbReference type="ChEBI" id="CHEBI:57604"/>
        <dbReference type="ChEBI" id="CHEBI:57945"/>
        <dbReference type="ChEBI" id="CHEBI:59776"/>
        <dbReference type="EC" id="1.2.1.59"/>
    </reaction>
</comment>
<comment type="pathway">
    <text evidence="1">Carbohydrate degradation; glycolysis; pyruvate from D-glyceraldehyde 3-phosphate: step 1/5.</text>
</comment>
<comment type="subunit">
    <text evidence="1">Homotetramer.</text>
</comment>
<comment type="subcellular location">
    <subcellularLocation>
        <location evidence="1">Cytoplasm</location>
    </subcellularLocation>
</comment>
<comment type="similarity">
    <text evidence="1">Belongs to the glyceraldehyde-3-phosphate dehydrogenase family.</text>
</comment>
<feature type="chain" id="PRO_0000300975" description="Glyceraldehyde-3-phosphate dehydrogenase">
    <location>
        <begin position="1"/>
        <end position="344"/>
    </location>
</feature>
<feature type="active site" description="Nucleophile" evidence="1">
    <location>
        <position position="140"/>
    </location>
</feature>
<feature type="binding site" evidence="1">
    <location>
        <begin position="11"/>
        <end position="12"/>
    </location>
    <ligand>
        <name>NAD(+)</name>
        <dbReference type="ChEBI" id="CHEBI:57540"/>
    </ligand>
</feature>
<feature type="binding site" evidence="1">
    <location>
        <position position="110"/>
    </location>
    <ligand>
        <name>NAD(+)</name>
        <dbReference type="ChEBI" id="CHEBI:57540"/>
    </ligand>
</feature>
<feature type="binding site" evidence="1">
    <location>
        <begin position="139"/>
        <end position="141"/>
    </location>
    <ligand>
        <name>D-glyceraldehyde 3-phosphate</name>
        <dbReference type="ChEBI" id="CHEBI:59776"/>
    </ligand>
</feature>
<feature type="binding site" evidence="1">
    <location>
        <position position="169"/>
    </location>
    <ligand>
        <name>NAD(+)</name>
        <dbReference type="ChEBI" id="CHEBI:57540"/>
    </ligand>
</feature>
<feature type="binding site" evidence="1">
    <location>
        <begin position="195"/>
        <end position="196"/>
    </location>
    <ligand>
        <name>D-glyceraldehyde 3-phosphate</name>
        <dbReference type="ChEBI" id="CHEBI:59776"/>
    </ligand>
</feature>
<feature type="binding site" evidence="1">
    <location>
        <position position="302"/>
    </location>
    <ligand>
        <name>NAD(+)</name>
        <dbReference type="ChEBI" id="CHEBI:57540"/>
    </ligand>
</feature>
<accession>A4WIW2</accession>
<gene>
    <name evidence="1" type="primary">gap</name>
    <name type="ordered locus">Pars_0743</name>
</gene>
<proteinExistence type="inferred from homology"/>